<dbReference type="EMBL" id="X75086">
    <property type="protein sequence ID" value="CAA52978.1"/>
    <property type="molecule type" value="Genomic_DNA"/>
</dbReference>
<dbReference type="EMBL" id="CR382122">
    <property type="protein sequence ID" value="CAH02003.1"/>
    <property type="molecule type" value="Genomic_DNA"/>
</dbReference>
<dbReference type="RefSeq" id="XP_451610.1">
    <property type="nucleotide sequence ID" value="XM_451610.1"/>
</dbReference>
<dbReference type="SMR" id="P41768"/>
<dbReference type="FunCoup" id="P41768">
    <property type="interactions" value="327"/>
</dbReference>
<dbReference type="STRING" id="284590.P41768"/>
<dbReference type="PaxDb" id="284590-P41768"/>
<dbReference type="KEGG" id="kla:KLLA0_B01782g"/>
<dbReference type="eggNOG" id="KOG4141">
    <property type="taxonomic scope" value="Eukaryota"/>
</dbReference>
<dbReference type="HOGENOM" id="CLU_011431_3_2_1"/>
<dbReference type="InParanoid" id="P41768"/>
<dbReference type="OMA" id="MFSDDFQ"/>
<dbReference type="Proteomes" id="UP000000598">
    <property type="component" value="Chromosome B"/>
</dbReference>
<dbReference type="GO" id="GO:0005634">
    <property type="term" value="C:nucleus"/>
    <property type="evidence" value="ECO:0007669"/>
    <property type="project" value="UniProtKB-SubCell"/>
</dbReference>
<dbReference type="GO" id="GO:0003677">
    <property type="term" value="F:DNA binding"/>
    <property type="evidence" value="ECO:0007669"/>
    <property type="project" value="UniProtKB-KW"/>
</dbReference>
<dbReference type="GO" id="GO:0000730">
    <property type="term" value="P:DNA recombinase assembly"/>
    <property type="evidence" value="ECO:0007669"/>
    <property type="project" value="InterPro"/>
</dbReference>
<dbReference type="GO" id="GO:0045002">
    <property type="term" value="P:double-strand break repair via single-strand annealing"/>
    <property type="evidence" value="ECO:0007669"/>
    <property type="project" value="InterPro"/>
</dbReference>
<dbReference type="GO" id="GO:0006312">
    <property type="term" value="P:mitotic recombination"/>
    <property type="evidence" value="ECO:0007669"/>
    <property type="project" value="TreeGrafter"/>
</dbReference>
<dbReference type="FunFam" id="3.30.390.80:FF:000001">
    <property type="entry name" value="DNA repair protein RAD52 homolog"/>
    <property type="match status" value="1"/>
</dbReference>
<dbReference type="Gene3D" id="3.30.390.80">
    <property type="entry name" value="DNA repair protein Rad52/59/22"/>
    <property type="match status" value="1"/>
</dbReference>
<dbReference type="InterPro" id="IPR004585">
    <property type="entry name" value="DNA_recomb/repair_Rad52"/>
</dbReference>
<dbReference type="InterPro" id="IPR041247">
    <property type="entry name" value="Rad52_fam"/>
</dbReference>
<dbReference type="InterPro" id="IPR007232">
    <property type="entry name" value="Rad52_Rad59_Rad22"/>
</dbReference>
<dbReference type="InterPro" id="IPR042525">
    <property type="entry name" value="Rad52_Rad59_Rad22_sf"/>
</dbReference>
<dbReference type="NCBIfam" id="TIGR00607">
    <property type="entry name" value="rad52"/>
    <property type="match status" value="1"/>
</dbReference>
<dbReference type="PANTHER" id="PTHR12132">
    <property type="entry name" value="DNA REPAIR AND RECOMBINATION PROTEIN RAD52, RAD59"/>
    <property type="match status" value="1"/>
</dbReference>
<dbReference type="PANTHER" id="PTHR12132:SF1">
    <property type="entry name" value="DNA REPAIR PROTEIN RAD52 HOMOLOG"/>
    <property type="match status" value="1"/>
</dbReference>
<dbReference type="Pfam" id="PF04098">
    <property type="entry name" value="Rad52_Rad22"/>
    <property type="match status" value="1"/>
</dbReference>
<dbReference type="SUPFAM" id="SSF54768">
    <property type="entry name" value="dsRNA-binding domain-like"/>
    <property type="match status" value="1"/>
</dbReference>
<protein>
    <recommendedName>
        <fullName>DNA repair and recombination protein RAD52</fullName>
    </recommendedName>
</protein>
<proteinExistence type="inferred from homology"/>
<evidence type="ECO:0000250" key="1"/>
<evidence type="ECO:0000256" key="2">
    <source>
        <dbReference type="SAM" id="MobiDB-lite"/>
    </source>
</evidence>
<evidence type="ECO:0000305" key="3"/>
<gene>
    <name type="primary">RAD52</name>
    <name type="ordered locus">KLLA0B01782g</name>
</gene>
<sequence length="436" mass="47751">MEDTGSGKNGKDDIQTKLDKKLGPEYISKRVGFGSSRVAYIEGWKAINLANQIFGYDGWSTEVKNVTIDFLDERQGRFSIGCTAIVRVSLADGTFREDIGYGTVENERRKASAFERAKKSAVTDALKRSLRGFGNALGNCLYDKDFLAKIDKVKFDPPDFDEGNLFRPADELSEMSRSNMVGDAHTEGPSLKKRSLTNEDRNAVPSAPAQQTYRSNNHTTQKRAPKAQAVTASASPNEETSNQQQDPDDLLDDSFMFSDEIQDDDLLNMNTTTNNKNSTNSSTTTTTISDEATGIISPVTFVTAKAATSLQHKDPIPSGSMFDPKFQAQSIRHTVDQSVSTPVRATILKEKGLDSDRSSIYSKFAPKGKELSGTTTNSEPYVAAPQTSATESNRSTPTRSNAQLAGPQPAPQLQGPQRTQLGRPRMLQQPNRRNVS</sequence>
<feature type="chain" id="PRO_0000173888" description="DNA repair and recombination protein RAD52">
    <location>
        <begin position="1"/>
        <end position="436"/>
    </location>
</feature>
<feature type="DNA-binding region" evidence="1">
    <location>
        <begin position="127"/>
        <end position="131"/>
    </location>
</feature>
<feature type="region of interest" description="Disordered" evidence="2">
    <location>
        <begin position="180"/>
        <end position="252"/>
    </location>
</feature>
<feature type="region of interest" description="Disordered" evidence="2">
    <location>
        <begin position="367"/>
        <end position="436"/>
    </location>
</feature>
<feature type="compositionally biased region" description="Polar residues" evidence="2">
    <location>
        <begin position="208"/>
        <end position="219"/>
    </location>
</feature>
<feature type="compositionally biased region" description="Polar residues" evidence="2">
    <location>
        <begin position="230"/>
        <end position="242"/>
    </location>
</feature>
<feature type="compositionally biased region" description="Polar residues" evidence="2">
    <location>
        <begin position="372"/>
        <end position="401"/>
    </location>
</feature>
<feature type="compositionally biased region" description="Low complexity" evidence="2">
    <location>
        <begin position="402"/>
        <end position="417"/>
    </location>
</feature>
<feature type="sequence conflict" description="In Ref. 1; CAA52978." evidence="3" ref="1">
    <original>A</original>
    <variation>P</variation>
    <location>
        <position position="207"/>
    </location>
</feature>
<feature type="sequence conflict" description="In Ref. 1; CAA52978." evidence="3" ref="1">
    <original>KA</original>
    <variation>I</variation>
    <location>
        <begin position="226"/>
        <end position="227"/>
    </location>
</feature>
<organism>
    <name type="scientific">Kluyveromyces lactis (strain ATCC 8585 / CBS 2359 / DSM 70799 / NBRC 1267 / NRRL Y-1140 / WM37)</name>
    <name type="common">Yeast</name>
    <name type="synonym">Candida sphaerica</name>
    <dbReference type="NCBI Taxonomy" id="284590"/>
    <lineage>
        <taxon>Eukaryota</taxon>
        <taxon>Fungi</taxon>
        <taxon>Dikarya</taxon>
        <taxon>Ascomycota</taxon>
        <taxon>Saccharomycotina</taxon>
        <taxon>Saccharomycetes</taxon>
        <taxon>Saccharomycetales</taxon>
        <taxon>Saccharomycetaceae</taxon>
        <taxon>Kluyveromyces</taxon>
    </lineage>
</organism>
<reference key="1">
    <citation type="journal article" date="1993" name="Genes Dev.">
        <title>Dominant negative alleles of RAD52 reveal a DNA repair/recombination complex including Rad51 and Rad52.</title>
        <authorList>
            <person name="Milne G.T."/>
            <person name="Weaver D.T."/>
        </authorList>
    </citation>
    <scope>NUCLEOTIDE SEQUENCE [GENOMIC DNA]</scope>
</reference>
<reference key="2">
    <citation type="journal article" date="2004" name="Nature">
        <title>Genome evolution in yeasts.</title>
        <authorList>
            <person name="Dujon B."/>
            <person name="Sherman D."/>
            <person name="Fischer G."/>
            <person name="Durrens P."/>
            <person name="Casaregola S."/>
            <person name="Lafontaine I."/>
            <person name="de Montigny J."/>
            <person name="Marck C."/>
            <person name="Neuveglise C."/>
            <person name="Talla E."/>
            <person name="Goffard N."/>
            <person name="Frangeul L."/>
            <person name="Aigle M."/>
            <person name="Anthouard V."/>
            <person name="Babour A."/>
            <person name="Barbe V."/>
            <person name="Barnay S."/>
            <person name="Blanchin S."/>
            <person name="Beckerich J.-M."/>
            <person name="Beyne E."/>
            <person name="Bleykasten C."/>
            <person name="Boisrame A."/>
            <person name="Boyer J."/>
            <person name="Cattolico L."/>
            <person name="Confanioleri F."/>
            <person name="de Daruvar A."/>
            <person name="Despons L."/>
            <person name="Fabre E."/>
            <person name="Fairhead C."/>
            <person name="Ferry-Dumazet H."/>
            <person name="Groppi A."/>
            <person name="Hantraye F."/>
            <person name="Hennequin C."/>
            <person name="Jauniaux N."/>
            <person name="Joyet P."/>
            <person name="Kachouri R."/>
            <person name="Kerrest A."/>
            <person name="Koszul R."/>
            <person name="Lemaire M."/>
            <person name="Lesur I."/>
            <person name="Ma L."/>
            <person name="Muller H."/>
            <person name="Nicaud J.-M."/>
            <person name="Nikolski M."/>
            <person name="Oztas S."/>
            <person name="Ozier-Kalogeropoulos O."/>
            <person name="Pellenz S."/>
            <person name="Potier S."/>
            <person name="Richard G.-F."/>
            <person name="Straub M.-L."/>
            <person name="Suleau A."/>
            <person name="Swennen D."/>
            <person name="Tekaia F."/>
            <person name="Wesolowski-Louvel M."/>
            <person name="Westhof E."/>
            <person name="Wirth B."/>
            <person name="Zeniou-Meyer M."/>
            <person name="Zivanovic Y."/>
            <person name="Bolotin-Fukuhara M."/>
            <person name="Thierry A."/>
            <person name="Bouchier C."/>
            <person name="Caudron B."/>
            <person name="Scarpelli C."/>
            <person name="Gaillardin C."/>
            <person name="Weissenbach J."/>
            <person name="Wincker P."/>
            <person name="Souciet J.-L."/>
        </authorList>
    </citation>
    <scope>NUCLEOTIDE SEQUENCE [LARGE SCALE GENOMIC DNA]</scope>
    <source>
        <strain>ATCC 8585 / CBS 2359 / DSM 70799 / NBRC 1267 / NRRL Y-1140 / WM37</strain>
    </source>
</reference>
<comment type="function">
    <text evidence="1">Involved in DNA double-strand break (DSB) repair and recombination. Promotes the annealing of complementary single-stranded DNA and by stimulation of the RAD51 recombinase (By similarity).</text>
</comment>
<comment type="subunit">
    <text evidence="1">Part of a complex that includes RAD51, RAD52 and RAD59.</text>
</comment>
<comment type="subcellular location">
    <subcellularLocation>
        <location evidence="1">Nucleus</location>
    </subcellularLocation>
</comment>
<comment type="similarity">
    <text evidence="3">Belongs to the RAD52 family.</text>
</comment>
<keyword id="KW-0227">DNA damage</keyword>
<keyword id="KW-0233">DNA recombination</keyword>
<keyword id="KW-0234">DNA repair</keyword>
<keyword id="KW-0238">DNA-binding</keyword>
<keyword id="KW-0539">Nucleus</keyword>
<keyword id="KW-1185">Reference proteome</keyword>
<accession>P41768</accession>
<accession>Q6CWS9</accession>
<name>RAD52_KLULA</name>